<comment type="catalytic activity">
    <reaction evidence="1">
        <text>hydrogencarbonate + H(+) = CO2 + H2O</text>
        <dbReference type="Rhea" id="RHEA:10748"/>
        <dbReference type="ChEBI" id="CHEBI:15377"/>
        <dbReference type="ChEBI" id="CHEBI:15378"/>
        <dbReference type="ChEBI" id="CHEBI:16526"/>
        <dbReference type="ChEBI" id="CHEBI:17544"/>
        <dbReference type="EC" id="4.2.1.1"/>
    </reaction>
</comment>
<comment type="cofactor">
    <cofactor evidence="1">
        <name>Zn(2+)</name>
        <dbReference type="ChEBI" id="CHEBI:29105"/>
    </cofactor>
    <text evidence="1">Binds 1 zinc ion per subunit.</text>
</comment>
<comment type="subunit">
    <text evidence="1">Homodimer.</text>
</comment>
<comment type="interaction">
    <interactant intactId="EBI-562106">
        <id>P61517</id>
    </interactant>
    <interactant intactId="EBI-301077">
        <id>P0CE47</id>
        <label>tufA</label>
    </interactant>
    <organismsDiffer>false</organismsDiffer>
    <experiments>2</experiments>
</comment>
<comment type="similarity">
    <text evidence="2">Belongs to the beta-class carbonic anhydrase family.</text>
</comment>
<protein>
    <recommendedName>
        <fullName>Carbonic anhydrase 2</fullName>
        <ecNumber evidence="1">4.2.1.1</ecNumber>
    </recommendedName>
    <alternativeName>
        <fullName>Carbonate dehydratase 2</fullName>
    </alternativeName>
</protein>
<organism>
    <name type="scientific">Escherichia coli (strain K12)</name>
    <dbReference type="NCBI Taxonomy" id="83333"/>
    <lineage>
        <taxon>Bacteria</taxon>
        <taxon>Pseudomonadati</taxon>
        <taxon>Pseudomonadota</taxon>
        <taxon>Gammaproteobacteria</taxon>
        <taxon>Enterobacterales</taxon>
        <taxon>Enterobacteriaceae</taxon>
        <taxon>Escherichia</taxon>
    </lineage>
</organism>
<sequence length="220" mass="25097">MKDIDTLISNNALWSKMLVEEDPGFFEKLAQAQKPRFLWIGCSDSRVPAERLTGLEPGELFVHRNVANLVIHTDLNCLSVVQYAVDVLEVEHIIICGHYGCGGVQAAVENPELGLINNWLLHIRDIWFKHSSLLGEMPQERRLDTLCELNVMEQVYNLGHSTIMQSAWKRGQKVTIHGWAYGIHDGLLRDLDVTATNRETLEQRYRHGISNLKLKHANHK</sequence>
<feature type="chain" id="PRO_0000077465" description="Carbonic anhydrase 2">
    <location>
        <begin position="1"/>
        <end position="220"/>
    </location>
</feature>
<feature type="binding site" evidence="1 3 4">
    <location>
        <position position="42"/>
    </location>
    <ligand>
        <name>Zn(2+)</name>
        <dbReference type="ChEBI" id="CHEBI:29105"/>
    </ligand>
</feature>
<feature type="binding site" evidence="1 3 4">
    <location>
        <position position="44"/>
    </location>
    <ligand>
        <name>Zn(2+)</name>
        <dbReference type="ChEBI" id="CHEBI:29105"/>
    </ligand>
</feature>
<feature type="binding site" evidence="1 3 4">
    <location>
        <position position="98"/>
    </location>
    <ligand>
        <name>Zn(2+)</name>
        <dbReference type="ChEBI" id="CHEBI:29105"/>
    </ligand>
</feature>
<feature type="binding site" evidence="1 3 4">
    <location>
        <position position="101"/>
    </location>
    <ligand>
        <name>Zn(2+)</name>
        <dbReference type="ChEBI" id="CHEBI:29105"/>
    </ligand>
</feature>
<feature type="helix" evidence="6">
    <location>
        <begin position="4"/>
        <end position="21"/>
    </location>
</feature>
<feature type="turn" evidence="6">
    <location>
        <begin position="23"/>
        <end position="26"/>
    </location>
</feature>
<feature type="helix" evidence="6">
    <location>
        <begin position="27"/>
        <end position="30"/>
    </location>
</feature>
<feature type="strand" evidence="6">
    <location>
        <begin position="36"/>
        <end position="42"/>
    </location>
</feature>
<feature type="helix" evidence="6">
    <location>
        <begin position="49"/>
        <end position="53"/>
    </location>
</feature>
<feature type="strand" evidence="6">
    <location>
        <begin position="59"/>
        <end position="65"/>
    </location>
</feature>
<feature type="helix" evidence="6">
    <location>
        <begin position="75"/>
        <end position="86"/>
    </location>
</feature>
<feature type="strand" evidence="6">
    <location>
        <begin position="91"/>
        <end position="98"/>
    </location>
</feature>
<feature type="helix" evidence="6">
    <location>
        <begin position="102"/>
        <end position="109"/>
    </location>
</feature>
<feature type="helix" evidence="6">
    <location>
        <begin position="116"/>
        <end position="129"/>
    </location>
</feature>
<feature type="helix" evidence="6">
    <location>
        <begin position="131"/>
        <end position="135"/>
    </location>
</feature>
<feature type="helix" evidence="6">
    <location>
        <begin position="139"/>
        <end position="141"/>
    </location>
</feature>
<feature type="helix" evidence="6">
    <location>
        <begin position="142"/>
        <end position="160"/>
    </location>
</feature>
<feature type="helix" evidence="6">
    <location>
        <begin position="162"/>
        <end position="169"/>
    </location>
</feature>
<feature type="strand" evidence="6">
    <location>
        <begin position="175"/>
        <end position="181"/>
    </location>
</feature>
<feature type="turn" evidence="6">
    <location>
        <begin position="183"/>
        <end position="185"/>
    </location>
</feature>
<feature type="strand" evidence="5">
    <location>
        <begin position="188"/>
        <end position="190"/>
    </location>
</feature>
<feature type="strand" evidence="6">
    <location>
        <begin position="195"/>
        <end position="197"/>
    </location>
</feature>
<feature type="helix" evidence="6">
    <location>
        <begin position="198"/>
        <end position="212"/>
    </location>
</feature>
<name>CAN_ECOLI</name>
<evidence type="ECO:0000269" key="1">
    <source>
    </source>
</evidence>
<evidence type="ECO:0000305" key="2"/>
<evidence type="ECO:0007744" key="3">
    <source>
        <dbReference type="PDB" id="1I6O"/>
    </source>
</evidence>
<evidence type="ECO:0007744" key="4">
    <source>
        <dbReference type="PDB" id="1I6P"/>
    </source>
</evidence>
<evidence type="ECO:0007829" key="5">
    <source>
        <dbReference type="PDB" id="1I6P"/>
    </source>
</evidence>
<evidence type="ECO:0007829" key="6">
    <source>
        <dbReference type="PDB" id="9EAT"/>
    </source>
</evidence>
<dbReference type="EC" id="4.2.1.1" evidence="1"/>
<dbReference type="EMBL" id="U00096">
    <property type="protein sequence ID" value="AAC73237.1"/>
    <property type="molecule type" value="Genomic_DNA"/>
</dbReference>
<dbReference type="EMBL" id="AP009048">
    <property type="protein sequence ID" value="BAB96701.2"/>
    <property type="molecule type" value="Genomic_DNA"/>
</dbReference>
<dbReference type="PIR" id="F64735">
    <property type="entry name" value="F64735"/>
</dbReference>
<dbReference type="RefSeq" id="NP_414668.1">
    <property type="nucleotide sequence ID" value="NC_000913.3"/>
</dbReference>
<dbReference type="RefSeq" id="WP_000651599.1">
    <property type="nucleotide sequence ID" value="NZ_STEB01000010.1"/>
</dbReference>
<dbReference type="PDB" id="1I6O">
    <property type="method" value="X-ray"/>
    <property type="resolution" value="2.20 A"/>
    <property type="chains" value="A/B=1-220"/>
</dbReference>
<dbReference type="PDB" id="1I6P">
    <property type="method" value="X-ray"/>
    <property type="resolution" value="2.00 A"/>
    <property type="chains" value="A=1-220"/>
</dbReference>
<dbReference type="PDB" id="1T75">
    <property type="method" value="X-ray"/>
    <property type="resolution" value="2.50 A"/>
    <property type="chains" value="A/B/D/E=1-220"/>
</dbReference>
<dbReference type="PDB" id="2ESF">
    <property type="method" value="X-ray"/>
    <property type="resolution" value="2.25 A"/>
    <property type="chains" value="A/B=1-220"/>
</dbReference>
<dbReference type="PDB" id="7SEV">
    <property type="method" value="X-ray"/>
    <property type="resolution" value="2.30 A"/>
    <property type="chains" value="A=1-220"/>
</dbReference>
<dbReference type="PDB" id="9EAT">
    <property type="method" value="X-ray"/>
    <property type="resolution" value="1.43 A"/>
    <property type="chains" value="A=1-220"/>
</dbReference>
<dbReference type="PDB" id="9EAW">
    <property type="method" value="X-ray"/>
    <property type="resolution" value="2.26 A"/>
    <property type="chains" value="A/B=1-220"/>
</dbReference>
<dbReference type="PDB" id="9EBZ">
    <property type="method" value="X-ray"/>
    <property type="resolution" value="2.66 A"/>
    <property type="chains" value="A/B/C/D=1-220"/>
</dbReference>
<dbReference type="PDBsum" id="1I6O"/>
<dbReference type="PDBsum" id="1I6P"/>
<dbReference type="PDBsum" id="1T75"/>
<dbReference type="PDBsum" id="2ESF"/>
<dbReference type="PDBsum" id="7SEV"/>
<dbReference type="PDBsum" id="9EAT"/>
<dbReference type="PDBsum" id="9EAW"/>
<dbReference type="PDBsum" id="9EBZ"/>
<dbReference type="SMR" id="P61517"/>
<dbReference type="BioGRID" id="4259733">
    <property type="interactions" value="40"/>
</dbReference>
<dbReference type="DIP" id="DIP-36168N"/>
<dbReference type="FunCoup" id="P61517">
    <property type="interactions" value="433"/>
</dbReference>
<dbReference type="IntAct" id="P61517">
    <property type="interactions" value="11"/>
</dbReference>
<dbReference type="STRING" id="511145.b0126"/>
<dbReference type="jPOST" id="P61517"/>
<dbReference type="PaxDb" id="511145-b0126"/>
<dbReference type="EnsemblBacteria" id="AAC73237">
    <property type="protein sequence ID" value="AAC73237"/>
    <property type="gene ID" value="b0126"/>
</dbReference>
<dbReference type="GeneID" id="93777310"/>
<dbReference type="GeneID" id="944832"/>
<dbReference type="KEGG" id="ecj:JW0122"/>
<dbReference type="KEGG" id="eco:b0126"/>
<dbReference type="KEGG" id="ecoc:C3026_00535"/>
<dbReference type="PATRIC" id="fig|1411691.4.peg.2156"/>
<dbReference type="EchoBASE" id="EB2224"/>
<dbReference type="eggNOG" id="COG0288">
    <property type="taxonomic scope" value="Bacteria"/>
</dbReference>
<dbReference type="HOGENOM" id="CLU_053879_3_0_6"/>
<dbReference type="InParanoid" id="P61517"/>
<dbReference type="OMA" id="WHYIIET"/>
<dbReference type="OrthoDB" id="9797527at2"/>
<dbReference type="PhylomeDB" id="P61517"/>
<dbReference type="BioCyc" id="EcoCyc:EG12319-MONOMER"/>
<dbReference type="BioCyc" id="MetaCyc:EG12319-MONOMER"/>
<dbReference type="BRENDA" id="4.2.1.1">
    <property type="organism ID" value="2026"/>
</dbReference>
<dbReference type="EvolutionaryTrace" id="P61517"/>
<dbReference type="PRO" id="PR:P61517"/>
<dbReference type="Proteomes" id="UP000000625">
    <property type="component" value="Chromosome"/>
</dbReference>
<dbReference type="GO" id="GO:0005829">
    <property type="term" value="C:cytosol"/>
    <property type="evidence" value="ECO:0000314"/>
    <property type="project" value="EcoCyc"/>
</dbReference>
<dbReference type="GO" id="GO:0004089">
    <property type="term" value="F:carbonate dehydratase activity"/>
    <property type="evidence" value="ECO:0000314"/>
    <property type="project" value="EcoCyc"/>
</dbReference>
<dbReference type="GO" id="GO:0042802">
    <property type="term" value="F:identical protein binding"/>
    <property type="evidence" value="ECO:0000314"/>
    <property type="project" value="EcoCyc"/>
</dbReference>
<dbReference type="GO" id="GO:0008270">
    <property type="term" value="F:zinc ion binding"/>
    <property type="evidence" value="ECO:0000314"/>
    <property type="project" value="EcoCyc"/>
</dbReference>
<dbReference type="GO" id="GO:0015976">
    <property type="term" value="P:carbon utilization"/>
    <property type="evidence" value="ECO:0000318"/>
    <property type="project" value="GO_Central"/>
</dbReference>
<dbReference type="GO" id="GO:0051289">
    <property type="term" value="P:protein homotetramerization"/>
    <property type="evidence" value="ECO:0000314"/>
    <property type="project" value="EcoCyc"/>
</dbReference>
<dbReference type="CDD" id="cd00883">
    <property type="entry name" value="beta_CA_cladeA"/>
    <property type="match status" value="1"/>
</dbReference>
<dbReference type="FunFam" id="3.40.1050.10:FF:000001">
    <property type="entry name" value="Carbonic anhydrase"/>
    <property type="match status" value="1"/>
</dbReference>
<dbReference type="Gene3D" id="3.40.1050.10">
    <property type="entry name" value="Carbonic anhydrase"/>
    <property type="match status" value="1"/>
</dbReference>
<dbReference type="InterPro" id="IPR001765">
    <property type="entry name" value="Carbonic_anhydrase"/>
</dbReference>
<dbReference type="InterPro" id="IPR015892">
    <property type="entry name" value="Carbonic_anhydrase_CS"/>
</dbReference>
<dbReference type="InterPro" id="IPR036874">
    <property type="entry name" value="Carbonic_anhydrase_sf"/>
</dbReference>
<dbReference type="NCBIfam" id="NF007756">
    <property type="entry name" value="PRK10437.1"/>
    <property type="match status" value="1"/>
</dbReference>
<dbReference type="PANTHER" id="PTHR11002">
    <property type="entry name" value="CARBONIC ANHYDRASE"/>
    <property type="match status" value="1"/>
</dbReference>
<dbReference type="PANTHER" id="PTHR11002:SF76">
    <property type="entry name" value="CARBONIC ANHYDRASE"/>
    <property type="match status" value="1"/>
</dbReference>
<dbReference type="Pfam" id="PF00484">
    <property type="entry name" value="Pro_CA"/>
    <property type="match status" value="1"/>
</dbReference>
<dbReference type="SMART" id="SM00947">
    <property type="entry name" value="Pro_CA"/>
    <property type="match status" value="1"/>
</dbReference>
<dbReference type="SUPFAM" id="SSF53056">
    <property type="entry name" value="beta-carbonic anhydrase, cab"/>
    <property type="match status" value="1"/>
</dbReference>
<dbReference type="PROSITE" id="PS00704">
    <property type="entry name" value="PROK_CO2_ANHYDRASE_1"/>
    <property type="match status" value="1"/>
</dbReference>
<dbReference type="PROSITE" id="PS00705">
    <property type="entry name" value="PROK_CO2_ANHYDRASE_2"/>
    <property type="match status" value="1"/>
</dbReference>
<reference key="1">
    <citation type="journal article" date="1994" name="Nucleic Acids Res.">
        <title>Systematic sequencing of the Escherichia coli genome: analysis of the 2.4-4.1 min (110,917-193,643 bp) region.</title>
        <authorList>
            <person name="Fujita N."/>
            <person name="Mori H."/>
            <person name="Yura T."/>
            <person name="Ishihama A."/>
        </authorList>
    </citation>
    <scope>NUCLEOTIDE SEQUENCE [LARGE SCALE GENOMIC DNA]</scope>
    <source>
        <strain>K12 / W3110 / ATCC 27325 / DSM 5911</strain>
    </source>
</reference>
<reference key="2">
    <citation type="journal article" date="1997" name="Science">
        <title>The complete genome sequence of Escherichia coli K-12.</title>
        <authorList>
            <person name="Blattner F.R."/>
            <person name="Plunkett G. III"/>
            <person name="Bloch C.A."/>
            <person name="Perna N.T."/>
            <person name="Burland V."/>
            <person name="Riley M."/>
            <person name="Collado-Vides J."/>
            <person name="Glasner J.D."/>
            <person name="Rode C.K."/>
            <person name="Mayhew G.F."/>
            <person name="Gregor J."/>
            <person name="Davis N.W."/>
            <person name="Kirkpatrick H.A."/>
            <person name="Goeden M.A."/>
            <person name="Rose D.J."/>
            <person name="Mau B."/>
            <person name="Shao Y."/>
        </authorList>
    </citation>
    <scope>NUCLEOTIDE SEQUENCE [LARGE SCALE GENOMIC DNA]</scope>
    <source>
        <strain>K12 / MG1655 / ATCC 47076</strain>
    </source>
</reference>
<reference key="3">
    <citation type="journal article" date="2006" name="Mol. Syst. Biol.">
        <title>Highly accurate genome sequences of Escherichia coli K-12 strains MG1655 and W3110.</title>
        <authorList>
            <person name="Hayashi K."/>
            <person name="Morooka N."/>
            <person name="Yamamoto Y."/>
            <person name="Fujita K."/>
            <person name="Isono K."/>
            <person name="Choi S."/>
            <person name="Ohtsubo E."/>
            <person name="Baba T."/>
            <person name="Wanner B.L."/>
            <person name="Mori H."/>
            <person name="Horiuchi T."/>
        </authorList>
    </citation>
    <scope>NUCLEOTIDE SEQUENCE [LARGE SCALE GENOMIC DNA]</scope>
    <scope>SEQUENCE REVISION</scope>
    <source>
        <strain>K12 / W3110 / ATCC 27325 / DSM 5911</strain>
    </source>
</reference>
<reference key="4">
    <citation type="journal article" date="1999" name="Electrophoresis">
        <title>Enrichment of low abundance proteins of Escherichia coli by hydroxyapatite chromatography.</title>
        <authorList>
            <person name="Fountoulakis M."/>
            <person name="Takacs M.-F."/>
            <person name="Berndt P."/>
            <person name="Langen H."/>
            <person name="Takacs B."/>
        </authorList>
    </citation>
    <scope>IDENTIFICATION BY MASS SPECTROMETRY</scope>
    <source>
        <strain>B / BL21</strain>
    </source>
</reference>
<reference key="5">
    <citation type="journal article" date="2001" name="Protein Sci.">
        <title>Crystal structure of E. coli beta-carbonic anhydrase, an enzyme with an unusual pH-dependent activity.</title>
        <authorList>
            <person name="Cronk J.D."/>
            <person name="Endrizzi J.A."/>
            <person name="Cronk M.R."/>
            <person name="O'neill J.W."/>
            <person name="Zhang K.Y.J."/>
        </authorList>
    </citation>
    <scope>X-RAY CRYSTALLOGRAPHY (2.00 ANGSTROMS) IN COMPLEX WITH ZINC ION</scope>
    <scope>CATALYTIC ACTIVITY</scope>
    <scope>SUBUNIT</scope>
</reference>
<proteinExistence type="evidence at protein level"/>
<keyword id="KW-0002">3D-structure</keyword>
<keyword id="KW-0456">Lyase</keyword>
<keyword id="KW-0479">Metal-binding</keyword>
<keyword id="KW-1185">Reference proteome</keyword>
<keyword id="KW-0862">Zinc</keyword>
<accession>P61517</accession>
<accession>P36857</accession>
<accession>P75656</accession>
<accession>Q8KJQ4</accession>
<gene>
    <name type="primary">can</name>
    <name type="synonym">cynT2</name>
    <name type="synonym">yadF</name>
    <name type="ordered locus">b0126</name>
    <name type="ordered locus">JW0122</name>
</gene>